<accession>O28212</accession>
<proteinExistence type="inferred from homology"/>
<evidence type="ECO:0000305" key="1"/>
<name>RL39_ARCFU</name>
<feature type="chain" id="PRO_0000127046" description="Large ribosomal subunit protein eL39">
    <location>
        <begin position="1"/>
        <end position="50"/>
    </location>
</feature>
<reference key="1">
    <citation type="journal article" date="1997" name="Nature">
        <title>The complete genome sequence of the hyperthermophilic, sulphate-reducing archaeon Archaeoglobus fulgidus.</title>
        <authorList>
            <person name="Klenk H.-P."/>
            <person name="Clayton R.A."/>
            <person name="Tomb J.-F."/>
            <person name="White O."/>
            <person name="Nelson K.E."/>
            <person name="Ketchum K.A."/>
            <person name="Dodson R.J."/>
            <person name="Gwinn M.L."/>
            <person name="Hickey E.K."/>
            <person name="Peterson J.D."/>
            <person name="Richardson D.L."/>
            <person name="Kerlavage A.R."/>
            <person name="Graham D.E."/>
            <person name="Kyrpides N.C."/>
            <person name="Fleischmann R.D."/>
            <person name="Quackenbush J."/>
            <person name="Lee N.H."/>
            <person name="Sutton G.G."/>
            <person name="Gill S.R."/>
            <person name="Kirkness E.F."/>
            <person name="Dougherty B.A."/>
            <person name="McKenney K."/>
            <person name="Adams M.D."/>
            <person name="Loftus B.J."/>
            <person name="Peterson S.N."/>
            <person name="Reich C.I."/>
            <person name="McNeil L.K."/>
            <person name="Badger J.H."/>
            <person name="Glodek A."/>
            <person name="Zhou L."/>
            <person name="Overbeek R."/>
            <person name="Gocayne J.D."/>
            <person name="Weidman J.F."/>
            <person name="McDonald L.A."/>
            <person name="Utterback T.R."/>
            <person name="Cotton M.D."/>
            <person name="Spriggs T."/>
            <person name="Artiach P."/>
            <person name="Kaine B.P."/>
            <person name="Sykes S.M."/>
            <person name="Sadow P.W."/>
            <person name="D'Andrea K.P."/>
            <person name="Bowman C."/>
            <person name="Fujii C."/>
            <person name="Garland S.A."/>
            <person name="Mason T.M."/>
            <person name="Olsen G.J."/>
            <person name="Fraser C.M."/>
            <person name="Smith H.O."/>
            <person name="Woese C.R."/>
            <person name="Venter J.C."/>
        </authorList>
    </citation>
    <scope>NUCLEOTIDE SEQUENCE [LARGE SCALE GENOMIC DNA]</scope>
    <source>
        <strain>ATCC 49558 / DSM 4304 / JCM 9628 / NBRC 100126 / VC-16</strain>
    </source>
</reference>
<comment type="similarity">
    <text evidence="1">Belongs to the eukaryotic ribosomal protein eL39 family.</text>
</comment>
<dbReference type="EMBL" id="AE000782">
    <property type="protein sequence ID" value="AAB89208.1"/>
    <property type="molecule type" value="Genomic_DNA"/>
</dbReference>
<dbReference type="PIR" id="B69508">
    <property type="entry name" value="B69508"/>
</dbReference>
<dbReference type="RefSeq" id="WP_010879559.1">
    <property type="nucleotide sequence ID" value="NC_000917.1"/>
</dbReference>
<dbReference type="SMR" id="O28212"/>
<dbReference type="STRING" id="224325.AF_2067"/>
<dbReference type="PaxDb" id="224325-AF_2067"/>
<dbReference type="EnsemblBacteria" id="AAB89208">
    <property type="protein sequence ID" value="AAB89208"/>
    <property type="gene ID" value="AF_2067"/>
</dbReference>
<dbReference type="KEGG" id="afu:AF_2067"/>
<dbReference type="eggNOG" id="arCOG04177">
    <property type="taxonomic scope" value="Archaea"/>
</dbReference>
<dbReference type="HOGENOM" id="CLU_181948_4_0_2"/>
<dbReference type="OrthoDB" id="65887at2157"/>
<dbReference type="PhylomeDB" id="O28212"/>
<dbReference type="Proteomes" id="UP000002199">
    <property type="component" value="Chromosome"/>
</dbReference>
<dbReference type="GO" id="GO:1990904">
    <property type="term" value="C:ribonucleoprotein complex"/>
    <property type="evidence" value="ECO:0007669"/>
    <property type="project" value="UniProtKB-KW"/>
</dbReference>
<dbReference type="GO" id="GO:0005840">
    <property type="term" value="C:ribosome"/>
    <property type="evidence" value="ECO:0007669"/>
    <property type="project" value="UniProtKB-KW"/>
</dbReference>
<dbReference type="GO" id="GO:0003735">
    <property type="term" value="F:structural constituent of ribosome"/>
    <property type="evidence" value="ECO:0007669"/>
    <property type="project" value="InterPro"/>
</dbReference>
<dbReference type="GO" id="GO:0006412">
    <property type="term" value="P:translation"/>
    <property type="evidence" value="ECO:0007669"/>
    <property type="project" value="UniProtKB-UniRule"/>
</dbReference>
<dbReference type="FunFam" id="1.10.1620.10:FF:000001">
    <property type="entry name" value="60S ribosomal protein-like L39"/>
    <property type="match status" value="1"/>
</dbReference>
<dbReference type="Gene3D" id="1.10.1620.10">
    <property type="entry name" value="Ribosomal protein L39e"/>
    <property type="match status" value="1"/>
</dbReference>
<dbReference type="HAMAP" id="MF_00629">
    <property type="entry name" value="Ribosomal_eL39"/>
    <property type="match status" value="1"/>
</dbReference>
<dbReference type="InterPro" id="IPR000077">
    <property type="entry name" value="Ribosomal_eL39"/>
</dbReference>
<dbReference type="InterPro" id="IPR020083">
    <property type="entry name" value="Ribosomal_eL39_CS"/>
</dbReference>
<dbReference type="InterPro" id="IPR023626">
    <property type="entry name" value="Ribosomal_eL39_dom_sf"/>
</dbReference>
<dbReference type="NCBIfam" id="NF002316">
    <property type="entry name" value="PRK01242.1"/>
    <property type="match status" value="1"/>
</dbReference>
<dbReference type="Pfam" id="PF00832">
    <property type="entry name" value="Ribosomal_L39"/>
    <property type="match status" value="1"/>
</dbReference>
<dbReference type="SUPFAM" id="SSF48662">
    <property type="entry name" value="Ribosomal protein L39e"/>
    <property type="match status" value="1"/>
</dbReference>
<dbReference type="PROSITE" id="PS00051">
    <property type="entry name" value="RIBOSOMAL_L39E"/>
    <property type="match status" value="1"/>
</dbReference>
<sequence>MGKKTVGVKKRLAKAYKQNRRAPVWITVKTKRSVFGSPKRRHWRRSKLKV</sequence>
<gene>
    <name type="primary">rpl39e</name>
    <name type="ordered locus">AF_2067</name>
</gene>
<organism>
    <name type="scientific">Archaeoglobus fulgidus (strain ATCC 49558 / DSM 4304 / JCM 9628 / NBRC 100126 / VC-16)</name>
    <dbReference type="NCBI Taxonomy" id="224325"/>
    <lineage>
        <taxon>Archaea</taxon>
        <taxon>Methanobacteriati</taxon>
        <taxon>Methanobacteriota</taxon>
        <taxon>Archaeoglobi</taxon>
        <taxon>Archaeoglobales</taxon>
        <taxon>Archaeoglobaceae</taxon>
        <taxon>Archaeoglobus</taxon>
    </lineage>
</organism>
<protein>
    <recommendedName>
        <fullName evidence="1">Large ribosomal subunit protein eL39</fullName>
    </recommendedName>
    <alternativeName>
        <fullName>50S ribosomal protein L39e</fullName>
    </alternativeName>
</protein>
<keyword id="KW-1185">Reference proteome</keyword>
<keyword id="KW-0687">Ribonucleoprotein</keyword>
<keyword id="KW-0689">Ribosomal protein</keyword>